<keyword id="KW-1185">Reference proteome</keyword>
<keyword id="KW-0732">Signal</keyword>
<feature type="signal peptide" evidence="1">
    <location>
        <begin position="1"/>
        <end position="22"/>
    </location>
</feature>
<feature type="chain" id="PRO_0000013653" description="Uncharacterized protein AF_1119">
    <location>
        <begin position="23"/>
        <end position="140"/>
    </location>
</feature>
<gene>
    <name type="ordered locus">AF_1119</name>
</gene>
<sequence length="140" mass="14994">MRLRWQTIVLLLLILGGASASAVYFSMKGNIDVIEDAISVSPASFSIDIAKGAHYVKEVKVKNSGGEAEIYFEDIVEGPDKSAIDVSFHTESGESISSSNKLRLPAGTADSPSETVIHVHIDVDDDAPTGSYAIYIHAKQ</sequence>
<protein>
    <recommendedName>
        <fullName>Uncharacterized protein AF_1119</fullName>
    </recommendedName>
</protein>
<organism>
    <name type="scientific">Archaeoglobus fulgidus (strain ATCC 49558 / DSM 4304 / JCM 9628 / NBRC 100126 / VC-16)</name>
    <dbReference type="NCBI Taxonomy" id="224325"/>
    <lineage>
        <taxon>Archaea</taxon>
        <taxon>Methanobacteriati</taxon>
        <taxon>Methanobacteriota</taxon>
        <taxon>Archaeoglobi</taxon>
        <taxon>Archaeoglobales</taxon>
        <taxon>Archaeoglobaceae</taxon>
        <taxon>Archaeoglobus</taxon>
    </lineage>
</organism>
<proteinExistence type="inferred from homology"/>
<reference key="1">
    <citation type="journal article" date="1997" name="Nature">
        <title>The complete genome sequence of the hyperthermophilic, sulphate-reducing archaeon Archaeoglobus fulgidus.</title>
        <authorList>
            <person name="Klenk H.-P."/>
            <person name="Clayton R.A."/>
            <person name="Tomb J.-F."/>
            <person name="White O."/>
            <person name="Nelson K.E."/>
            <person name="Ketchum K.A."/>
            <person name="Dodson R.J."/>
            <person name="Gwinn M.L."/>
            <person name="Hickey E.K."/>
            <person name="Peterson J.D."/>
            <person name="Richardson D.L."/>
            <person name="Kerlavage A.R."/>
            <person name="Graham D.E."/>
            <person name="Kyrpides N.C."/>
            <person name="Fleischmann R.D."/>
            <person name="Quackenbush J."/>
            <person name="Lee N.H."/>
            <person name="Sutton G.G."/>
            <person name="Gill S.R."/>
            <person name="Kirkness E.F."/>
            <person name="Dougherty B.A."/>
            <person name="McKenney K."/>
            <person name="Adams M.D."/>
            <person name="Loftus B.J."/>
            <person name="Peterson S.N."/>
            <person name="Reich C.I."/>
            <person name="McNeil L.K."/>
            <person name="Badger J.H."/>
            <person name="Glodek A."/>
            <person name="Zhou L."/>
            <person name="Overbeek R."/>
            <person name="Gocayne J.D."/>
            <person name="Weidman J.F."/>
            <person name="McDonald L.A."/>
            <person name="Utterback T.R."/>
            <person name="Cotton M.D."/>
            <person name="Spriggs T."/>
            <person name="Artiach P."/>
            <person name="Kaine B.P."/>
            <person name="Sykes S.M."/>
            <person name="Sadow P.W."/>
            <person name="D'Andrea K.P."/>
            <person name="Bowman C."/>
            <person name="Fujii C."/>
            <person name="Garland S.A."/>
            <person name="Mason T.M."/>
            <person name="Olsen G.J."/>
            <person name="Fraser C.M."/>
            <person name="Smith H.O."/>
            <person name="Woese C.R."/>
            <person name="Venter J.C."/>
        </authorList>
    </citation>
    <scope>NUCLEOTIDE SEQUENCE [LARGE SCALE GENOMIC DNA]</scope>
    <source>
        <strain>ATCC 49558 / DSM 4304 / JCM 9628 / NBRC 100126 / VC-16</strain>
    </source>
</reference>
<evidence type="ECO:0000255" key="1"/>
<name>Y1119_ARCFU</name>
<accession>O29146</accession>
<dbReference type="EMBL" id="AE000782">
    <property type="protein sequence ID" value="AAB90140.1"/>
    <property type="molecule type" value="Genomic_DNA"/>
</dbReference>
<dbReference type="PIR" id="F69389">
    <property type="entry name" value="F69389"/>
</dbReference>
<dbReference type="RefSeq" id="WP_010878615.1">
    <property type="nucleotide sequence ID" value="NC_000917.1"/>
</dbReference>
<dbReference type="STRING" id="224325.AF_1119"/>
<dbReference type="PaxDb" id="224325-AF_1119"/>
<dbReference type="DNASU" id="1484341"/>
<dbReference type="EnsemblBacteria" id="AAB90140">
    <property type="protein sequence ID" value="AAB90140"/>
    <property type="gene ID" value="AF_1119"/>
</dbReference>
<dbReference type="KEGG" id="afu:AF_1119"/>
<dbReference type="eggNOG" id="arCOG02082">
    <property type="taxonomic scope" value="Archaea"/>
</dbReference>
<dbReference type="HOGENOM" id="CLU_1850527_0_0_2"/>
<dbReference type="Proteomes" id="UP000002199">
    <property type="component" value="Chromosome"/>
</dbReference>